<gene>
    <name evidence="1" type="primary">rsmJ</name>
    <name type="ordered locus">NTHI1015</name>
</gene>
<accession>Q4QM52</accession>
<evidence type="ECO:0000255" key="1">
    <source>
        <dbReference type="HAMAP-Rule" id="MF_01523"/>
    </source>
</evidence>
<evidence type="ECO:0000305" key="2"/>
<comment type="function">
    <text evidence="1">Specifically methylates the guanosine in position 1516 of 16S rRNA.</text>
</comment>
<comment type="catalytic activity">
    <reaction evidence="1">
        <text>guanosine(1516) in 16S rRNA + S-adenosyl-L-methionine = N(2)-methylguanosine(1516) in 16S rRNA + S-adenosyl-L-homocysteine + H(+)</text>
        <dbReference type="Rhea" id="RHEA:43220"/>
        <dbReference type="Rhea" id="RHEA-COMP:10412"/>
        <dbReference type="Rhea" id="RHEA-COMP:10413"/>
        <dbReference type="ChEBI" id="CHEBI:15378"/>
        <dbReference type="ChEBI" id="CHEBI:57856"/>
        <dbReference type="ChEBI" id="CHEBI:59789"/>
        <dbReference type="ChEBI" id="CHEBI:74269"/>
        <dbReference type="ChEBI" id="CHEBI:74481"/>
        <dbReference type="EC" id="2.1.1.242"/>
    </reaction>
</comment>
<comment type="subcellular location">
    <subcellularLocation>
        <location evidence="1">Cytoplasm</location>
    </subcellularLocation>
</comment>
<comment type="similarity">
    <text evidence="1">Belongs to the methyltransferase superfamily. RsmJ family.</text>
</comment>
<comment type="sequence caution" evidence="2">
    <conflict type="erroneous initiation">
        <sequence resource="EMBL-CDS" id="AAX87895"/>
    </conflict>
    <text>Truncated N-terminus.</text>
</comment>
<proteinExistence type="inferred from homology"/>
<dbReference type="EC" id="2.1.1.242" evidence="1"/>
<dbReference type="EMBL" id="CP000057">
    <property type="protein sequence ID" value="AAX87895.1"/>
    <property type="status" value="ALT_INIT"/>
    <property type="molecule type" value="Genomic_DNA"/>
</dbReference>
<dbReference type="RefSeq" id="WP_038440334.1">
    <property type="nucleotide sequence ID" value="NC_007146.2"/>
</dbReference>
<dbReference type="SMR" id="Q4QM52"/>
<dbReference type="GeneID" id="93219889"/>
<dbReference type="KEGG" id="hit:NTHI1015"/>
<dbReference type="HOGENOM" id="CLU_076324_0_0_6"/>
<dbReference type="Proteomes" id="UP000002525">
    <property type="component" value="Chromosome"/>
</dbReference>
<dbReference type="GO" id="GO:0005737">
    <property type="term" value="C:cytoplasm"/>
    <property type="evidence" value="ECO:0007669"/>
    <property type="project" value="UniProtKB-SubCell"/>
</dbReference>
<dbReference type="GO" id="GO:0008990">
    <property type="term" value="F:rRNA (guanine-N2-)-methyltransferase activity"/>
    <property type="evidence" value="ECO:0007669"/>
    <property type="project" value="UniProtKB-UniRule"/>
</dbReference>
<dbReference type="Gene3D" id="3.40.50.150">
    <property type="entry name" value="Vaccinia Virus protein VP39"/>
    <property type="match status" value="1"/>
</dbReference>
<dbReference type="Gene3D" id="3.40.1630.10">
    <property type="entry name" value="YhiQ-like domain"/>
    <property type="match status" value="1"/>
</dbReference>
<dbReference type="HAMAP" id="MF_01523">
    <property type="entry name" value="16SrRNA_methyltr_J"/>
    <property type="match status" value="1"/>
</dbReference>
<dbReference type="InterPro" id="IPR007536">
    <property type="entry name" value="16SrRNA_methylTrfase_J"/>
</dbReference>
<dbReference type="InterPro" id="IPR029063">
    <property type="entry name" value="SAM-dependent_MTases_sf"/>
</dbReference>
<dbReference type="PANTHER" id="PTHR36112">
    <property type="entry name" value="RIBOSOMAL RNA SMALL SUBUNIT METHYLTRANSFERASE J"/>
    <property type="match status" value="1"/>
</dbReference>
<dbReference type="PANTHER" id="PTHR36112:SF1">
    <property type="entry name" value="RIBOSOMAL RNA SMALL SUBUNIT METHYLTRANSFERASE J"/>
    <property type="match status" value="1"/>
</dbReference>
<dbReference type="Pfam" id="PF04445">
    <property type="entry name" value="SAM_MT"/>
    <property type="match status" value="1"/>
</dbReference>
<dbReference type="SUPFAM" id="SSF53335">
    <property type="entry name" value="S-adenosyl-L-methionine-dependent methyltransferases"/>
    <property type="match status" value="1"/>
</dbReference>
<sequence>MAHSQVGIQLISESTEKTLAELIALCAEHNIIHNEKSPLALVQTDDRLELRKLDEPKLGAVYVDFVGGTMAHRRKFGGGRGEAVAKAVGIKGSALPTVIDATAGLGRDAFVLAAIGCQVRLVERHPVVFLLLQDGLNRAYQDEEIGEMLQQNLHLLNVQHINELDPNSDYADVVYLDPMYPHKQKSALVKKEMRVFQHLVGADLDADELLLPALQLAKKRVVVKRPDYAEFLCGKQPHFSRETKNHRFDIYMGASQC</sequence>
<name>RSMJ_HAEI8</name>
<feature type="chain" id="PRO_0000212070" description="Ribosomal RNA small subunit methyltransferase J">
    <location>
        <begin position="1"/>
        <end position="257"/>
    </location>
</feature>
<feature type="binding site" evidence="1">
    <location>
        <begin position="107"/>
        <end position="108"/>
    </location>
    <ligand>
        <name>S-adenosyl-L-methionine</name>
        <dbReference type="ChEBI" id="CHEBI:59789"/>
    </ligand>
</feature>
<feature type="binding site" evidence="1">
    <location>
        <begin position="123"/>
        <end position="124"/>
    </location>
    <ligand>
        <name>S-adenosyl-L-methionine</name>
        <dbReference type="ChEBI" id="CHEBI:59789"/>
    </ligand>
</feature>
<feature type="binding site" evidence="1">
    <location>
        <position position="177"/>
    </location>
    <ligand>
        <name>S-adenosyl-L-methionine</name>
        <dbReference type="ChEBI" id="CHEBI:59789"/>
    </ligand>
</feature>
<keyword id="KW-0963">Cytoplasm</keyword>
<keyword id="KW-0489">Methyltransferase</keyword>
<keyword id="KW-0698">rRNA processing</keyword>
<keyword id="KW-0949">S-adenosyl-L-methionine</keyword>
<keyword id="KW-0808">Transferase</keyword>
<reference key="1">
    <citation type="journal article" date="2005" name="J. Bacteriol.">
        <title>Genomic sequence of an otitis media isolate of nontypeable Haemophilus influenzae: comparative study with H. influenzae serotype d, strain KW20.</title>
        <authorList>
            <person name="Harrison A."/>
            <person name="Dyer D.W."/>
            <person name="Gillaspy A."/>
            <person name="Ray W.C."/>
            <person name="Mungur R."/>
            <person name="Carson M.B."/>
            <person name="Zhong H."/>
            <person name="Gipson J."/>
            <person name="Gipson M."/>
            <person name="Johnson L.S."/>
            <person name="Lewis L."/>
            <person name="Bakaletz L.O."/>
            <person name="Munson R.S. Jr."/>
        </authorList>
    </citation>
    <scope>NUCLEOTIDE SEQUENCE [LARGE SCALE GENOMIC DNA]</scope>
    <source>
        <strain>86-028NP</strain>
    </source>
</reference>
<protein>
    <recommendedName>
        <fullName evidence="1">Ribosomal RNA small subunit methyltransferase J</fullName>
        <ecNumber evidence="1">2.1.1.242</ecNumber>
    </recommendedName>
    <alternativeName>
        <fullName evidence="1">16S rRNA m2G1516 methyltransferase</fullName>
    </alternativeName>
    <alternativeName>
        <fullName evidence="1">rRNA (guanine-N(2)-)-methyltransferase</fullName>
    </alternativeName>
</protein>
<organism>
    <name type="scientific">Haemophilus influenzae (strain 86-028NP)</name>
    <dbReference type="NCBI Taxonomy" id="281310"/>
    <lineage>
        <taxon>Bacteria</taxon>
        <taxon>Pseudomonadati</taxon>
        <taxon>Pseudomonadota</taxon>
        <taxon>Gammaproteobacteria</taxon>
        <taxon>Pasteurellales</taxon>
        <taxon>Pasteurellaceae</taxon>
        <taxon>Haemophilus</taxon>
    </lineage>
</organism>